<keyword id="KW-0975">Bacterial flagellum</keyword>
<keyword id="KW-0998">Cell outer membrane</keyword>
<keyword id="KW-0449">Lipoprotein</keyword>
<keyword id="KW-0472">Membrane</keyword>
<keyword id="KW-0564">Palmitate</keyword>
<keyword id="KW-0732">Signal</keyword>
<sequence>MIKLFICQKKYYLTAIFLLTIQSCASVEYKPLVTGATTAIAPNIWPKVVNGSLFQEKIPINYGYQPLFEDHRPHNIGDTITVVLQENISASNSSISNMSRDGSANFGLKIAPGQLNNILGVNFQDNTTSLDSFGRNNFSGKGSNSANNKFTGLITVTVKRVLPNGNLKVIGEKQVSINKGTEFIRFSGVINPTNINKNNFISSTQIADARIEYLSHGGLDDVQKMGWLQKLLLKISPI</sequence>
<gene>
    <name evidence="1" type="primary">flgH</name>
    <name type="ordered locus">BUAP5A_337</name>
</gene>
<feature type="signal peptide" evidence="1">
    <location>
        <begin position="1"/>
        <end position="23"/>
    </location>
</feature>
<feature type="chain" id="PRO_1000134826" description="Flagellar L-ring protein">
    <location>
        <begin position="24"/>
        <end position="238"/>
    </location>
</feature>
<feature type="lipid moiety-binding region" description="N-palmitoyl cysteine" evidence="1">
    <location>
        <position position="24"/>
    </location>
</feature>
<feature type="lipid moiety-binding region" description="S-diacylglycerol cysteine" evidence="1">
    <location>
        <position position="24"/>
    </location>
</feature>
<proteinExistence type="inferred from homology"/>
<organism>
    <name type="scientific">Buchnera aphidicola subsp. Acyrthosiphon pisum (strain 5A)</name>
    <dbReference type="NCBI Taxonomy" id="563178"/>
    <lineage>
        <taxon>Bacteria</taxon>
        <taxon>Pseudomonadati</taxon>
        <taxon>Pseudomonadota</taxon>
        <taxon>Gammaproteobacteria</taxon>
        <taxon>Enterobacterales</taxon>
        <taxon>Erwiniaceae</taxon>
        <taxon>Buchnera</taxon>
    </lineage>
</organism>
<comment type="function">
    <text evidence="1">Assembles around the rod to form the L-ring and probably protects the motor/basal body from shearing forces during rotation.</text>
</comment>
<comment type="subunit">
    <text evidence="1">The basal body constitutes a major portion of the flagellar organelle and consists of four rings (L,P,S, and M) mounted on a central rod.</text>
</comment>
<comment type="subcellular location">
    <subcellularLocation>
        <location evidence="1">Cell outer membrane</location>
        <topology evidence="1">Lipid-anchor</topology>
    </subcellularLocation>
    <subcellularLocation>
        <location evidence="1">Bacterial flagellum basal body</location>
    </subcellularLocation>
</comment>
<comment type="similarity">
    <text evidence="1">Belongs to the FlgH family.</text>
</comment>
<name>FLGH_BUCA5</name>
<evidence type="ECO:0000255" key="1">
    <source>
        <dbReference type="HAMAP-Rule" id="MF_00415"/>
    </source>
</evidence>
<dbReference type="EMBL" id="CP001161">
    <property type="protein sequence ID" value="ACL30700.1"/>
    <property type="molecule type" value="Genomic_DNA"/>
</dbReference>
<dbReference type="RefSeq" id="WP_009874298.1">
    <property type="nucleotide sequence ID" value="NC_011833.1"/>
</dbReference>
<dbReference type="SMR" id="B8D9C9"/>
<dbReference type="KEGG" id="bap:BUAP5A_337"/>
<dbReference type="HOGENOM" id="CLU_069313_0_0_6"/>
<dbReference type="OrthoDB" id="9789463at2"/>
<dbReference type="Proteomes" id="UP000006904">
    <property type="component" value="Chromosome"/>
</dbReference>
<dbReference type="GO" id="GO:0009427">
    <property type="term" value="C:bacterial-type flagellum basal body, distal rod, L ring"/>
    <property type="evidence" value="ECO:0007669"/>
    <property type="project" value="InterPro"/>
</dbReference>
<dbReference type="GO" id="GO:0009279">
    <property type="term" value="C:cell outer membrane"/>
    <property type="evidence" value="ECO:0007669"/>
    <property type="project" value="UniProtKB-SubCell"/>
</dbReference>
<dbReference type="GO" id="GO:0003774">
    <property type="term" value="F:cytoskeletal motor activity"/>
    <property type="evidence" value="ECO:0007669"/>
    <property type="project" value="InterPro"/>
</dbReference>
<dbReference type="GO" id="GO:0071973">
    <property type="term" value="P:bacterial-type flagellum-dependent cell motility"/>
    <property type="evidence" value="ECO:0007669"/>
    <property type="project" value="InterPro"/>
</dbReference>
<dbReference type="HAMAP" id="MF_00415">
    <property type="entry name" value="FlgH"/>
    <property type="match status" value="1"/>
</dbReference>
<dbReference type="InterPro" id="IPR000527">
    <property type="entry name" value="Flag_Lring"/>
</dbReference>
<dbReference type="PANTHER" id="PTHR34933">
    <property type="entry name" value="FLAGELLAR L-RING PROTEIN"/>
    <property type="match status" value="1"/>
</dbReference>
<dbReference type="PANTHER" id="PTHR34933:SF3">
    <property type="entry name" value="FLAGELLAR L-RING PROTEIN"/>
    <property type="match status" value="1"/>
</dbReference>
<dbReference type="Pfam" id="PF02107">
    <property type="entry name" value="FlgH"/>
    <property type="match status" value="1"/>
</dbReference>
<dbReference type="PRINTS" id="PR01008">
    <property type="entry name" value="FLGLRINGFLGH"/>
</dbReference>
<dbReference type="PROSITE" id="PS51257">
    <property type="entry name" value="PROKAR_LIPOPROTEIN"/>
    <property type="match status" value="1"/>
</dbReference>
<protein>
    <recommendedName>
        <fullName evidence="1">Flagellar L-ring protein</fullName>
    </recommendedName>
    <alternativeName>
        <fullName evidence="1">Basal body L-ring protein</fullName>
    </alternativeName>
</protein>
<accession>B8D9C9</accession>
<reference key="1">
    <citation type="journal article" date="2009" name="Science">
        <title>The dynamics and time scale of ongoing genomic erosion in symbiotic bacteria.</title>
        <authorList>
            <person name="Moran N.A."/>
            <person name="McLaughlin H.J."/>
            <person name="Sorek R."/>
        </authorList>
    </citation>
    <scope>NUCLEOTIDE SEQUENCE [LARGE SCALE GENOMIC DNA]</scope>
    <source>
        <strain>5A</strain>
    </source>
</reference>